<dbReference type="EMBL" id="CP000266">
    <property type="protein sequence ID" value="ABF05837.1"/>
    <property type="molecule type" value="Genomic_DNA"/>
</dbReference>
<dbReference type="RefSeq" id="WP_001279744.1">
    <property type="nucleotide sequence ID" value="NC_008258.1"/>
</dbReference>
<dbReference type="SMR" id="Q0SYM8"/>
<dbReference type="KEGG" id="sfv:SFV_3826"/>
<dbReference type="HOGENOM" id="CLU_035023_3_1_6"/>
<dbReference type="Proteomes" id="UP000000659">
    <property type="component" value="Chromosome"/>
</dbReference>
<dbReference type="GO" id="GO:0005886">
    <property type="term" value="C:plasma membrane"/>
    <property type="evidence" value="ECO:0007669"/>
    <property type="project" value="UniProtKB-SubCell"/>
</dbReference>
<dbReference type="GO" id="GO:0008324">
    <property type="term" value="F:monoatomic cation transmembrane transporter activity"/>
    <property type="evidence" value="ECO:0007669"/>
    <property type="project" value="InterPro"/>
</dbReference>
<dbReference type="GO" id="GO:0006813">
    <property type="term" value="P:potassium ion transport"/>
    <property type="evidence" value="ECO:0007669"/>
    <property type="project" value="InterPro"/>
</dbReference>
<dbReference type="FunFam" id="3.30.70.1450:FF:000004">
    <property type="entry name" value="Putative transport protein YidE"/>
    <property type="match status" value="1"/>
</dbReference>
<dbReference type="Gene3D" id="3.30.70.1450">
    <property type="entry name" value="Regulator of K+ conductance, C-terminal domain"/>
    <property type="match status" value="2"/>
</dbReference>
<dbReference type="HAMAP" id="MF_01016">
    <property type="entry name" value="YidE"/>
    <property type="match status" value="1"/>
</dbReference>
<dbReference type="InterPro" id="IPR050144">
    <property type="entry name" value="AAE_transporter"/>
</dbReference>
<dbReference type="InterPro" id="IPR006037">
    <property type="entry name" value="RCK_C"/>
</dbReference>
<dbReference type="InterPro" id="IPR036721">
    <property type="entry name" value="RCK_C_sf"/>
</dbReference>
<dbReference type="InterPro" id="IPR023018">
    <property type="entry name" value="Transpt_YidE_put"/>
</dbReference>
<dbReference type="InterPro" id="IPR006512">
    <property type="entry name" value="YidE_YbjL"/>
</dbReference>
<dbReference type="NCBIfam" id="NF003007">
    <property type="entry name" value="PRK03818.1"/>
    <property type="match status" value="1"/>
</dbReference>
<dbReference type="NCBIfam" id="TIGR01625">
    <property type="entry name" value="YidE_YbjL_dupl"/>
    <property type="match status" value="2"/>
</dbReference>
<dbReference type="PANTHER" id="PTHR30445">
    <property type="entry name" value="K(+)_H(+) ANTIPORTER SUBUNIT KHTT"/>
    <property type="match status" value="1"/>
</dbReference>
<dbReference type="PANTHER" id="PTHR30445:SF3">
    <property type="entry name" value="TRANSPORT PROTEIN YIDE-RELATED"/>
    <property type="match status" value="1"/>
</dbReference>
<dbReference type="Pfam" id="PF06826">
    <property type="entry name" value="Asp-Al_Ex"/>
    <property type="match status" value="2"/>
</dbReference>
<dbReference type="Pfam" id="PF02080">
    <property type="entry name" value="TrkA_C"/>
    <property type="match status" value="1"/>
</dbReference>
<dbReference type="SUPFAM" id="SSF116726">
    <property type="entry name" value="TrkA C-terminal domain-like"/>
    <property type="match status" value="2"/>
</dbReference>
<dbReference type="PROSITE" id="PS51202">
    <property type="entry name" value="RCK_C"/>
    <property type="match status" value="2"/>
</dbReference>
<organism>
    <name type="scientific">Shigella flexneri serotype 5b (strain 8401)</name>
    <dbReference type="NCBI Taxonomy" id="373384"/>
    <lineage>
        <taxon>Bacteria</taxon>
        <taxon>Pseudomonadati</taxon>
        <taxon>Pseudomonadota</taxon>
        <taxon>Gammaproteobacteria</taxon>
        <taxon>Enterobacterales</taxon>
        <taxon>Enterobacteriaceae</taxon>
        <taxon>Shigella</taxon>
    </lineage>
</organism>
<keyword id="KW-1003">Cell membrane</keyword>
<keyword id="KW-0472">Membrane</keyword>
<keyword id="KW-0677">Repeat</keyword>
<keyword id="KW-0812">Transmembrane</keyword>
<keyword id="KW-1133">Transmembrane helix</keyword>
<keyword id="KW-0813">Transport</keyword>
<feature type="chain" id="PRO_1000063256" description="Putative transport protein YidE">
    <location>
        <begin position="1"/>
        <end position="553"/>
    </location>
</feature>
<feature type="transmembrane region" description="Helical" evidence="1">
    <location>
        <begin position="4"/>
        <end position="24"/>
    </location>
</feature>
<feature type="transmembrane region" description="Helical" evidence="1">
    <location>
        <begin position="28"/>
        <end position="48"/>
    </location>
</feature>
<feature type="transmembrane region" description="Helical" evidence="1">
    <location>
        <begin position="65"/>
        <end position="85"/>
    </location>
</feature>
<feature type="transmembrane region" description="Helical" evidence="1">
    <location>
        <begin position="95"/>
        <end position="115"/>
    </location>
</feature>
<feature type="transmembrane region" description="Helical" evidence="1">
    <location>
        <begin position="158"/>
        <end position="178"/>
    </location>
</feature>
<feature type="transmembrane region" description="Helical" evidence="1">
    <location>
        <begin position="371"/>
        <end position="391"/>
    </location>
</feature>
<feature type="transmembrane region" description="Helical" evidence="1">
    <location>
        <begin position="393"/>
        <end position="413"/>
    </location>
</feature>
<feature type="transmembrane region" description="Helical" evidence="1">
    <location>
        <begin position="439"/>
        <end position="459"/>
    </location>
</feature>
<feature type="transmembrane region" description="Helical" evidence="1">
    <location>
        <begin position="464"/>
        <end position="484"/>
    </location>
</feature>
<feature type="transmembrane region" description="Helical" evidence="1">
    <location>
        <begin position="493"/>
        <end position="513"/>
    </location>
</feature>
<feature type="transmembrane region" description="Helical" evidence="1">
    <location>
        <begin position="533"/>
        <end position="553"/>
    </location>
</feature>
<feature type="domain" description="RCK C-terminal 1" evidence="1">
    <location>
        <begin position="191"/>
        <end position="276"/>
    </location>
</feature>
<feature type="domain" description="RCK C-terminal 2" evidence="1">
    <location>
        <begin position="279"/>
        <end position="361"/>
    </location>
</feature>
<comment type="subcellular location">
    <subcellularLocation>
        <location evidence="1">Cell membrane</location>
        <topology evidence="1">Multi-pass membrane protein</topology>
    </subcellularLocation>
</comment>
<comment type="similarity">
    <text evidence="1">Belongs to the AAE transporter (TC 2.A.81) family. YidE subfamily.</text>
</comment>
<proteinExistence type="inferred from homology"/>
<protein>
    <recommendedName>
        <fullName evidence="1">Putative transport protein YidE</fullName>
    </recommendedName>
</protein>
<sequence length="553" mass="59010">MSDIALTVSILALVAVVGLFIGNVKFRGIGLGIGGVLFGGIIVGHFVSQAGMTLSSDMLHVIQEFGLILFVYTIGIQVGPGFFASLRVSGLRLNLFAVLIVIIGGLVTAILHKLFDIPLPVVLGIFSGAVTNTPALGAGQQILRDLGTPMEMVDQMGMSYAMAYPFGICGILFTMWMLRVIFRVNVETEAQQHESSRTNAGALIKTINIRVENPNRHDLAIKDVPILNGDKIICSRLKREETLKVPSPDTIIQLGDLLHLVGQPADLHNAQLVIGQEVDTSLSTKGTDLRVERVVVTNENVLGKRIRDLHFKERYDVVISRLNRAGVELVASGDISLQFGDILNLVGRPSAIDAVANVLGNAQQKLQQVQMLPVFIGIGLGVLLGSIPVFVPGFPAALKLGLAGGPLIMALILGRIGSIGKLYWFMPPSANLALRELGIVLFLSIVGLKSGGDFVNTLVNGEGLSWIGYGALITAVPLITVGILARMLAKMNYLTMCGMLAGSMTDPPALAFANNLHPTSGAAALSYATVYPLVMFLRIITPQLLAVLFWSIG</sequence>
<gene>
    <name evidence="1" type="primary">yidE</name>
    <name type="ordered locus">SFV_3826</name>
</gene>
<accession>Q0SYM8</accession>
<evidence type="ECO:0000255" key="1">
    <source>
        <dbReference type="HAMAP-Rule" id="MF_01016"/>
    </source>
</evidence>
<name>YIDE_SHIF8</name>
<reference key="1">
    <citation type="journal article" date="2006" name="BMC Genomics">
        <title>Complete genome sequence of Shigella flexneri 5b and comparison with Shigella flexneri 2a.</title>
        <authorList>
            <person name="Nie H."/>
            <person name="Yang F."/>
            <person name="Zhang X."/>
            <person name="Yang J."/>
            <person name="Chen L."/>
            <person name="Wang J."/>
            <person name="Xiong Z."/>
            <person name="Peng J."/>
            <person name="Sun L."/>
            <person name="Dong J."/>
            <person name="Xue Y."/>
            <person name="Xu X."/>
            <person name="Chen S."/>
            <person name="Yao Z."/>
            <person name="Shen Y."/>
            <person name="Jin Q."/>
        </authorList>
    </citation>
    <scope>NUCLEOTIDE SEQUENCE [LARGE SCALE GENOMIC DNA]</scope>
    <source>
        <strain>8401</strain>
    </source>
</reference>